<protein>
    <recommendedName>
        <fullName evidence="1">Pyridoxine/pyridoxamine 5'-phosphate oxidase</fullName>
        <ecNumber evidence="1">1.4.3.5</ecNumber>
    </recommendedName>
    <alternativeName>
        <fullName evidence="1">PNP/PMP oxidase</fullName>
        <shortName evidence="1">PNPOx</shortName>
    </alternativeName>
    <alternativeName>
        <fullName evidence="1">Pyridoxal 5'-phosphate synthase</fullName>
    </alternativeName>
</protein>
<organism>
    <name type="scientific">Psychrobacter arcticus (strain DSM 17307 / VKM B-2377 / 273-4)</name>
    <dbReference type="NCBI Taxonomy" id="259536"/>
    <lineage>
        <taxon>Bacteria</taxon>
        <taxon>Pseudomonadati</taxon>
        <taxon>Pseudomonadota</taxon>
        <taxon>Gammaproteobacteria</taxon>
        <taxon>Moraxellales</taxon>
        <taxon>Moraxellaceae</taxon>
        <taxon>Psychrobacter</taxon>
    </lineage>
</organism>
<gene>
    <name evidence="1" type="primary">pdxH</name>
    <name type="ordered locus">Psyc_1358</name>
</gene>
<reference key="1">
    <citation type="journal article" date="2010" name="Appl. Environ. Microbiol.">
        <title>The genome sequence of Psychrobacter arcticus 273-4, a psychroactive Siberian permafrost bacterium, reveals mechanisms for adaptation to low-temperature growth.</title>
        <authorList>
            <person name="Ayala-del-Rio H.L."/>
            <person name="Chain P.S."/>
            <person name="Grzymski J.J."/>
            <person name="Ponder M.A."/>
            <person name="Ivanova N."/>
            <person name="Bergholz P.W."/>
            <person name="Di Bartolo G."/>
            <person name="Hauser L."/>
            <person name="Land M."/>
            <person name="Bakermans C."/>
            <person name="Rodrigues D."/>
            <person name="Klappenbach J."/>
            <person name="Zarka D."/>
            <person name="Larimer F."/>
            <person name="Richardson P."/>
            <person name="Murray A."/>
            <person name="Thomashow M."/>
            <person name="Tiedje J.M."/>
        </authorList>
    </citation>
    <scope>NUCLEOTIDE SEQUENCE [LARGE SCALE GENOMIC DNA]</scope>
    <source>
        <strain>DSM 17307 / VKM B-2377 / 273-4</strain>
    </source>
</reference>
<sequence>MNMDFTDQRLSYEKGQLDQQSVPISPFELLKAWMHEAIEEQVQEPYAMSLATCGADDKPSVRIVLLREITDKGIVFYTNYESAKGQDIAENPNAEALFFWHKLERQIRISGSIAKIDADKSAAYFQKRPHDSQVGTWVSQPQSGEVASRDVMEQTFEQLQTDYPDGAAVPTPGFWGGYEITVSEIEFWQGRANRMHDRIVYHKEVDGSFSTKRLLP</sequence>
<evidence type="ECO:0000255" key="1">
    <source>
        <dbReference type="HAMAP-Rule" id="MF_01629"/>
    </source>
</evidence>
<proteinExistence type="inferred from homology"/>
<accession>Q4FS02</accession>
<keyword id="KW-0285">Flavoprotein</keyword>
<keyword id="KW-0288">FMN</keyword>
<keyword id="KW-0560">Oxidoreductase</keyword>
<keyword id="KW-0664">Pyridoxine biosynthesis</keyword>
<keyword id="KW-1185">Reference proteome</keyword>
<feature type="chain" id="PRO_0000167742" description="Pyridoxine/pyridoxamine 5'-phosphate oxidase">
    <location>
        <begin position="1"/>
        <end position="216"/>
    </location>
</feature>
<feature type="binding site" evidence="1">
    <location>
        <begin position="9"/>
        <end position="12"/>
    </location>
    <ligand>
        <name>substrate</name>
    </ligand>
</feature>
<feature type="binding site" evidence="1">
    <location>
        <begin position="62"/>
        <end position="67"/>
    </location>
    <ligand>
        <name>FMN</name>
        <dbReference type="ChEBI" id="CHEBI:58210"/>
    </ligand>
</feature>
<feature type="binding site" evidence="1">
    <location>
        <position position="67"/>
    </location>
    <ligand>
        <name>substrate</name>
    </ligand>
</feature>
<feature type="binding site" evidence="1">
    <location>
        <begin position="77"/>
        <end position="78"/>
    </location>
    <ligand>
        <name>FMN</name>
        <dbReference type="ChEBI" id="CHEBI:58210"/>
    </ligand>
</feature>
<feature type="binding site" evidence="1">
    <location>
        <position position="84"/>
    </location>
    <ligand>
        <name>FMN</name>
        <dbReference type="ChEBI" id="CHEBI:58210"/>
    </ligand>
</feature>
<feature type="binding site" evidence="1">
    <location>
        <position position="106"/>
    </location>
    <ligand>
        <name>FMN</name>
        <dbReference type="ChEBI" id="CHEBI:58210"/>
    </ligand>
</feature>
<feature type="binding site" evidence="1">
    <location>
        <position position="124"/>
    </location>
    <ligand>
        <name>substrate</name>
    </ligand>
</feature>
<feature type="binding site" evidence="1">
    <location>
        <position position="128"/>
    </location>
    <ligand>
        <name>substrate</name>
    </ligand>
</feature>
<feature type="binding site" evidence="1">
    <location>
        <position position="132"/>
    </location>
    <ligand>
        <name>substrate</name>
    </ligand>
</feature>
<feature type="binding site" evidence="1">
    <location>
        <begin position="142"/>
        <end position="143"/>
    </location>
    <ligand>
        <name>FMN</name>
        <dbReference type="ChEBI" id="CHEBI:58210"/>
    </ligand>
</feature>
<feature type="binding site" evidence="1">
    <location>
        <position position="188"/>
    </location>
    <ligand>
        <name>FMN</name>
        <dbReference type="ChEBI" id="CHEBI:58210"/>
    </ligand>
</feature>
<feature type="binding site" evidence="1">
    <location>
        <begin position="194"/>
        <end position="196"/>
    </location>
    <ligand>
        <name>substrate</name>
    </ligand>
</feature>
<feature type="binding site" evidence="1">
    <location>
        <position position="198"/>
    </location>
    <ligand>
        <name>FMN</name>
        <dbReference type="ChEBI" id="CHEBI:58210"/>
    </ligand>
</feature>
<comment type="function">
    <text evidence="1">Catalyzes the oxidation of either pyridoxine 5'-phosphate (PNP) or pyridoxamine 5'-phosphate (PMP) into pyridoxal 5'-phosphate (PLP).</text>
</comment>
<comment type="catalytic activity">
    <reaction evidence="1">
        <text>pyridoxamine 5'-phosphate + O2 + H2O = pyridoxal 5'-phosphate + H2O2 + NH4(+)</text>
        <dbReference type="Rhea" id="RHEA:15817"/>
        <dbReference type="ChEBI" id="CHEBI:15377"/>
        <dbReference type="ChEBI" id="CHEBI:15379"/>
        <dbReference type="ChEBI" id="CHEBI:16240"/>
        <dbReference type="ChEBI" id="CHEBI:28938"/>
        <dbReference type="ChEBI" id="CHEBI:58451"/>
        <dbReference type="ChEBI" id="CHEBI:597326"/>
        <dbReference type="EC" id="1.4.3.5"/>
    </reaction>
</comment>
<comment type="catalytic activity">
    <reaction evidence="1">
        <text>pyridoxine 5'-phosphate + O2 = pyridoxal 5'-phosphate + H2O2</text>
        <dbReference type="Rhea" id="RHEA:15149"/>
        <dbReference type="ChEBI" id="CHEBI:15379"/>
        <dbReference type="ChEBI" id="CHEBI:16240"/>
        <dbReference type="ChEBI" id="CHEBI:58589"/>
        <dbReference type="ChEBI" id="CHEBI:597326"/>
        <dbReference type="EC" id="1.4.3.5"/>
    </reaction>
</comment>
<comment type="cofactor">
    <cofactor evidence="1">
        <name>FMN</name>
        <dbReference type="ChEBI" id="CHEBI:58210"/>
    </cofactor>
    <text evidence="1">Binds 1 FMN per subunit.</text>
</comment>
<comment type="pathway">
    <text evidence="1">Cofactor metabolism; pyridoxal 5'-phosphate salvage; pyridoxal 5'-phosphate from pyridoxamine 5'-phosphate: step 1/1.</text>
</comment>
<comment type="pathway">
    <text evidence="1">Cofactor metabolism; pyridoxal 5'-phosphate salvage; pyridoxal 5'-phosphate from pyridoxine 5'-phosphate: step 1/1.</text>
</comment>
<comment type="subunit">
    <text evidence="1">Homodimer.</text>
</comment>
<comment type="similarity">
    <text evidence="1">Belongs to the pyridoxamine 5'-phosphate oxidase family.</text>
</comment>
<name>PDXH_PSYA2</name>
<dbReference type="EC" id="1.4.3.5" evidence="1"/>
<dbReference type="EMBL" id="CP000082">
    <property type="protein sequence ID" value="AAZ19206.1"/>
    <property type="molecule type" value="Genomic_DNA"/>
</dbReference>
<dbReference type="RefSeq" id="WP_011280627.1">
    <property type="nucleotide sequence ID" value="NC_007204.1"/>
</dbReference>
<dbReference type="SMR" id="Q4FS02"/>
<dbReference type="STRING" id="259536.Psyc_1358"/>
<dbReference type="KEGG" id="par:Psyc_1358"/>
<dbReference type="eggNOG" id="COG0259">
    <property type="taxonomic scope" value="Bacteria"/>
</dbReference>
<dbReference type="HOGENOM" id="CLU_032263_2_2_6"/>
<dbReference type="OrthoDB" id="9780392at2"/>
<dbReference type="UniPathway" id="UPA01068">
    <property type="reaction ID" value="UER00304"/>
</dbReference>
<dbReference type="UniPathway" id="UPA01068">
    <property type="reaction ID" value="UER00305"/>
</dbReference>
<dbReference type="Proteomes" id="UP000000546">
    <property type="component" value="Chromosome"/>
</dbReference>
<dbReference type="GO" id="GO:0010181">
    <property type="term" value="F:FMN binding"/>
    <property type="evidence" value="ECO:0007669"/>
    <property type="project" value="UniProtKB-UniRule"/>
</dbReference>
<dbReference type="GO" id="GO:0004733">
    <property type="term" value="F:pyridoxamine phosphate oxidase activity"/>
    <property type="evidence" value="ECO:0007669"/>
    <property type="project" value="UniProtKB-UniRule"/>
</dbReference>
<dbReference type="GO" id="GO:0008615">
    <property type="term" value="P:pyridoxine biosynthetic process"/>
    <property type="evidence" value="ECO:0007669"/>
    <property type="project" value="UniProtKB-KW"/>
</dbReference>
<dbReference type="Gene3D" id="2.30.110.10">
    <property type="entry name" value="Electron Transport, Fmn-binding Protein, Chain A"/>
    <property type="match status" value="1"/>
</dbReference>
<dbReference type="HAMAP" id="MF_01629">
    <property type="entry name" value="PdxH"/>
    <property type="match status" value="1"/>
</dbReference>
<dbReference type="InterPro" id="IPR000659">
    <property type="entry name" value="Pyridox_Oxase"/>
</dbReference>
<dbReference type="InterPro" id="IPR019740">
    <property type="entry name" value="Pyridox_Oxase_CS"/>
</dbReference>
<dbReference type="InterPro" id="IPR011576">
    <property type="entry name" value="Pyridox_Oxase_N"/>
</dbReference>
<dbReference type="InterPro" id="IPR019576">
    <property type="entry name" value="Pyridoxamine_oxidase_dimer_C"/>
</dbReference>
<dbReference type="InterPro" id="IPR012349">
    <property type="entry name" value="Split_barrel_FMN-bd"/>
</dbReference>
<dbReference type="NCBIfam" id="TIGR00558">
    <property type="entry name" value="pdxH"/>
    <property type="match status" value="1"/>
</dbReference>
<dbReference type="NCBIfam" id="NF004231">
    <property type="entry name" value="PRK05679.1"/>
    <property type="match status" value="1"/>
</dbReference>
<dbReference type="PANTHER" id="PTHR10851:SF0">
    <property type="entry name" value="PYRIDOXINE-5'-PHOSPHATE OXIDASE"/>
    <property type="match status" value="1"/>
</dbReference>
<dbReference type="PANTHER" id="PTHR10851">
    <property type="entry name" value="PYRIDOXINE-5-PHOSPHATE OXIDASE"/>
    <property type="match status" value="1"/>
</dbReference>
<dbReference type="Pfam" id="PF10590">
    <property type="entry name" value="PNP_phzG_C"/>
    <property type="match status" value="1"/>
</dbReference>
<dbReference type="Pfam" id="PF01243">
    <property type="entry name" value="PNPOx_N"/>
    <property type="match status" value="1"/>
</dbReference>
<dbReference type="PIRSF" id="PIRSF000190">
    <property type="entry name" value="Pyd_amn-ph_oxd"/>
    <property type="match status" value="1"/>
</dbReference>
<dbReference type="SUPFAM" id="SSF50475">
    <property type="entry name" value="FMN-binding split barrel"/>
    <property type="match status" value="1"/>
</dbReference>
<dbReference type="PROSITE" id="PS01064">
    <property type="entry name" value="PYRIDOX_OXIDASE"/>
    <property type="match status" value="1"/>
</dbReference>